<sequence length="234" mass="26095">MKNMLLMSGSKYKDTAYLVHTLPWLAQFLADYKGKKVAFVPYAGVRRSFDEYETAVKNALQSLELEIVSVHRGKQHRDIIEQADVIAIGGGNTFCLLKQMYEHDLLDAIRAKVNSGTPYFGWSAGANVAGSSIMTTNDMPITYPPSFNALNLFPHQINPHFISGKMQGHNGESREERLEEFLIVNPQSLVYAMPEGTALHIQGEQATVLGAQDILCFSEKMQLDTKAVNSTFNY</sequence>
<gene>
    <name evidence="1" type="primary">pepE</name>
    <name type="ordered locus">APJL_0883</name>
</gene>
<organism>
    <name type="scientific">Actinobacillus pleuropneumoniae serotype 3 (strain JL03)</name>
    <dbReference type="NCBI Taxonomy" id="434271"/>
    <lineage>
        <taxon>Bacteria</taxon>
        <taxon>Pseudomonadati</taxon>
        <taxon>Pseudomonadota</taxon>
        <taxon>Gammaproteobacteria</taxon>
        <taxon>Pasteurellales</taxon>
        <taxon>Pasteurellaceae</taxon>
        <taxon>Actinobacillus</taxon>
    </lineage>
</organism>
<name>PEPE_ACTPJ</name>
<accession>B0BPF6</accession>
<reference key="1">
    <citation type="journal article" date="2008" name="PLoS ONE">
        <title>Genome biology of Actinobacillus pleuropneumoniae JL03, an isolate of serotype 3 prevalent in China.</title>
        <authorList>
            <person name="Xu Z."/>
            <person name="Zhou Y."/>
            <person name="Li L."/>
            <person name="Zhou R."/>
            <person name="Xiao S."/>
            <person name="Wan Y."/>
            <person name="Zhang S."/>
            <person name="Wang K."/>
            <person name="Li W."/>
            <person name="Li L."/>
            <person name="Jin H."/>
            <person name="Kang M."/>
            <person name="Dalai B."/>
            <person name="Li T."/>
            <person name="Liu L."/>
            <person name="Cheng Y."/>
            <person name="Zhang L."/>
            <person name="Xu T."/>
            <person name="Zheng H."/>
            <person name="Pu S."/>
            <person name="Wang B."/>
            <person name="Gu W."/>
            <person name="Zhang X.L."/>
            <person name="Zhu G.-F."/>
            <person name="Wang S."/>
            <person name="Zhao G.-P."/>
            <person name="Chen H."/>
        </authorList>
    </citation>
    <scope>NUCLEOTIDE SEQUENCE [LARGE SCALE GENOMIC DNA]</scope>
    <source>
        <strain>JL03</strain>
    </source>
</reference>
<protein>
    <recommendedName>
        <fullName evidence="1">Peptidase E</fullName>
        <ecNumber evidence="1">3.4.13.21</ecNumber>
    </recommendedName>
    <alternativeName>
        <fullName evidence="1">Alpha-aspartyl dipeptidase</fullName>
    </alternativeName>
    <alternativeName>
        <fullName evidence="1">Asp-specific dipeptidase</fullName>
    </alternativeName>
    <alternativeName>
        <fullName evidence="1">Dipeptidase E</fullName>
    </alternativeName>
</protein>
<proteinExistence type="inferred from homology"/>
<dbReference type="EC" id="3.4.13.21" evidence="1"/>
<dbReference type="EMBL" id="CP000687">
    <property type="protein sequence ID" value="ABY69441.1"/>
    <property type="molecule type" value="Genomic_DNA"/>
</dbReference>
<dbReference type="RefSeq" id="WP_005597380.1">
    <property type="nucleotide sequence ID" value="NC_010278.1"/>
</dbReference>
<dbReference type="SMR" id="B0BPF6"/>
<dbReference type="MEROPS" id="S51.001"/>
<dbReference type="GeneID" id="48599058"/>
<dbReference type="KEGG" id="apj:APJL_0883"/>
<dbReference type="HOGENOM" id="CLU_071689_0_0_6"/>
<dbReference type="Proteomes" id="UP000008547">
    <property type="component" value="Chromosome"/>
</dbReference>
<dbReference type="GO" id="GO:0005737">
    <property type="term" value="C:cytoplasm"/>
    <property type="evidence" value="ECO:0007669"/>
    <property type="project" value="UniProtKB-SubCell"/>
</dbReference>
<dbReference type="GO" id="GO:0016805">
    <property type="term" value="F:dipeptidase activity"/>
    <property type="evidence" value="ECO:0007669"/>
    <property type="project" value="UniProtKB-UniRule"/>
</dbReference>
<dbReference type="GO" id="GO:0008236">
    <property type="term" value="F:serine-type peptidase activity"/>
    <property type="evidence" value="ECO:0007669"/>
    <property type="project" value="UniProtKB-KW"/>
</dbReference>
<dbReference type="GO" id="GO:0006508">
    <property type="term" value="P:proteolysis"/>
    <property type="evidence" value="ECO:0007669"/>
    <property type="project" value="UniProtKB-UniRule"/>
</dbReference>
<dbReference type="CDD" id="cd03146">
    <property type="entry name" value="GAT1_Peptidase_E"/>
    <property type="match status" value="1"/>
</dbReference>
<dbReference type="FunFam" id="3.40.50.880:FF:000007">
    <property type="entry name" value="Peptidase E"/>
    <property type="match status" value="1"/>
</dbReference>
<dbReference type="Gene3D" id="3.40.50.880">
    <property type="match status" value="1"/>
</dbReference>
<dbReference type="HAMAP" id="MF_00510">
    <property type="entry name" value="Peptidase_E"/>
    <property type="match status" value="1"/>
</dbReference>
<dbReference type="InterPro" id="IPR029062">
    <property type="entry name" value="Class_I_gatase-like"/>
</dbReference>
<dbReference type="InterPro" id="IPR005320">
    <property type="entry name" value="Peptidase_S51"/>
</dbReference>
<dbReference type="InterPro" id="IPR023172">
    <property type="entry name" value="Peptidase_S51_dipeptidase-E"/>
</dbReference>
<dbReference type="NCBIfam" id="NF003642">
    <property type="entry name" value="PRK05282.1"/>
    <property type="match status" value="1"/>
</dbReference>
<dbReference type="PANTHER" id="PTHR20842:SF0">
    <property type="entry name" value="ALPHA-ASPARTYL DIPEPTIDASE"/>
    <property type="match status" value="1"/>
</dbReference>
<dbReference type="PANTHER" id="PTHR20842">
    <property type="entry name" value="PROTEASE S51 ALPHA-ASPARTYL DIPEPTIDASE"/>
    <property type="match status" value="1"/>
</dbReference>
<dbReference type="Pfam" id="PF03575">
    <property type="entry name" value="Peptidase_S51"/>
    <property type="match status" value="1"/>
</dbReference>
<dbReference type="SUPFAM" id="SSF52317">
    <property type="entry name" value="Class I glutamine amidotransferase-like"/>
    <property type="match status" value="1"/>
</dbReference>
<keyword id="KW-0963">Cytoplasm</keyword>
<keyword id="KW-0224">Dipeptidase</keyword>
<keyword id="KW-0378">Hydrolase</keyword>
<keyword id="KW-0645">Protease</keyword>
<keyword id="KW-0720">Serine protease</keyword>
<feature type="chain" id="PRO_1000127239" description="Peptidase E">
    <location>
        <begin position="1"/>
        <end position="234"/>
    </location>
</feature>
<feature type="active site" description="Charge relay system" evidence="1">
    <location>
        <position position="123"/>
    </location>
</feature>
<feature type="active site" description="Charge relay system" evidence="1">
    <location>
        <position position="138"/>
    </location>
</feature>
<feature type="active site" description="Charge relay system" evidence="1">
    <location>
        <position position="160"/>
    </location>
</feature>
<comment type="function">
    <text evidence="1">Hydrolyzes dipeptides containing N-terminal aspartate residues. May play a role in allowing the cell to use peptide aspartate to spare carbon otherwise required for the synthesis of the aspartate family of amino acids.</text>
</comment>
<comment type="catalytic activity">
    <reaction evidence="1">
        <text>Dipeptidase E catalyzes the hydrolysis of dipeptides Asp-|-Xaa. It does not act on peptides with N-terminal Glu, Asn or Gln, nor does it cleave isoaspartyl peptides.</text>
        <dbReference type="EC" id="3.4.13.21"/>
    </reaction>
</comment>
<comment type="subcellular location">
    <subcellularLocation>
        <location evidence="1">Cytoplasm</location>
    </subcellularLocation>
</comment>
<comment type="similarity">
    <text evidence="1">Belongs to the peptidase S51 family.</text>
</comment>
<evidence type="ECO:0000255" key="1">
    <source>
        <dbReference type="HAMAP-Rule" id="MF_00510"/>
    </source>
</evidence>